<keyword id="KW-0008">Acetylcholine receptor inhibiting toxin</keyword>
<keyword id="KW-1015">Disulfide bond</keyword>
<keyword id="KW-0872">Ion channel impairing toxin</keyword>
<keyword id="KW-0528">Neurotoxin</keyword>
<keyword id="KW-0629">Postsynaptic neurotoxin</keyword>
<keyword id="KW-0964">Secreted</keyword>
<keyword id="KW-0732">Signal</keyword>
<keyword id="KW-0800">Toxin</keyword>
<reference key="1">
    <citation type="journal article" date="1999" name="Genome Res.">
        <title>Postsynaptic alpha-neurotoxin gene of the spitting cobra, Naja naja sputatrix: structure, organization, and phylogenetic analysis.</title>
        <authorList>
            <person name="Afifiyan F."/>
            <person name="Armugam A."/>
            <person name="Tan C.H."/>
            <person name="Gopalakrishnakone P."/>
            <person name="Jeyaseelan K."/>
        </authorList>
    </citation>
    <scope>NUCLEOTIDE SEQUENCE [GENOMIC DNA]</scope>
    <source>
        <tissue>Liver</tissue>
    </source>
</reference>
<reference key="2">
    <citation type="submission" date="1995-05" db="EMBL/GenBank/DDBJ databases">
        <title>Cloning of genes encoding neurotoxin in the venom of naja naja sputatrix.</title>
        <authorList>
            <person name="Jeyaseelan K."/>
            <person name="Armugam A."/>
            <person name="Lachumanan R."/>
            <person name="Earnest L."/>
            <person name="Tan N.H."/>
            <person name="Tan C.H."/>
            <person name="Gopalakrishnakone P.P."/>
        </authorList>
    </citation>
    <scope>NUCLEOTIDE SEQUENCE [MRNA] OF 22-83</scope>
    <source>
        <tissue>Venom gland</tissue>
    </source>
</reference>
<protein>
    <recommendedName>
        <fullName>Alpha-neurotoxin NTX-1</fullName>
        <shortName>NTX1</shortName>
    </recommendedName>
</protein>
<organism>
    <name type="scientific">Naja sputatrix</name>
    <name type="common">Malayan spitting cobra</name>
    <name type="synonym">Naja naja sputatrix</name>
    <dbReference type="NCBI Taxonomy" id="33626"/>
    <lineage>
        <taxon>Eukaryota</taxon>
        <taxon>Metazoa</taxon>
        <taxon>Chordata</taxon>
        <taxon>Craniata</taxon>
        <taxon>Vertebrata</taxon>
        <taxon>Euteleostomi</taxon>
        <taxon>Lepidosauria</taxon>
        <taxon>Squamata</taxon>
        <taxon>Bifurcata</taxon>
        <taxon>Unidentata</taxon>
        <taxon>Episquamata</taxon>
        <taxon>Toxicofera</taxon>
        <taxon>Serpentes</taxon>
        <taxon>Colubroidea</taxon>
        <taxon>Elapidae</taxon>
        <taxon>Elapinae</taxon>
        <taxon>Naja</taxon>
    </lineage>
</organism>
<evidence type="ECO:0000250" key="1"/>
<evidence type="ECO:0000250" key="2">
    <source>
        <dbReference type="UniProtKB" id="P0C1Z0"/>
    </source>
</evidence>
<evidence type="ECO:0000250" key="3">
    <source>
        <dbReference type="UniProtKB" id="P60775"/>
    </source>
</evidence>
<evidence type="ECO:0000305" key="4"/>
<accession>Q9YGJ6</accession>
<accession>Q91138</accession>
<sequence>MKTLLLTLLVVTIVCLDLGYTLECHNQQSSETPTTTGCSGGETNCYKKSWRDHRGYRIERGCGCPSVKKGIEINCCTTDRCNN</sequence>
<name>3S1A1_NAJSP</name>
<dbReference type="EMBL" id="AF096999">
    <property type="protein sequence ID" value="AAD08812.1"/>
    <property type="molecule type" value="Genomic_DNA"/>
</dbReference>
<dbReference type="EMBL" id="L42002">
    <property type="protein sequence ID" value="AAA66025.1"/>
    <property type="molecule type" value="mRNA"/>
</dbReference>
<dbReference type="SMR" id="Q9YGJ6"/>
<dbReference type="GO" id="GO:0005576">
    <property type="term" value="C:extracellular region"/>
    <property type="evidence" value="ECO:0007669"/>
    <property type="project" value="UniProtKB-SubCell"/>
</dbReference>
<dbReference type="GO" id="GO:0030550">
    <property type="term" value="F:acetylcholine receptor inhibitor activity"/>
    <property type="evidence" value="ECO:0007669"/>
    <property type="project" value="UniProtKB-KW"/>
</dbReference>
<dbReference type="GO" id="GO:0099106">
    <property type="term" value="F:ion channel regulator activity"/>
    <property type="evidence" value="ECO:0007669"/>
    <property type="project" value="UniProtKB-KW"/>
</dbReference>
<dbReference type="GO" id="GO:0090729">
    <property type="term" value="F:toxin activity"/>
    <property type="evidence" value="ECO:0007669"/>
    <property type="project" value="UniProtKB-KW"/>
</dbReference>
<dbReference type="CDD" id="cd00206">
    <property type="entry name" value="TFP_snake_toxin"/>
    <property type="match status" value="1"/>
</dbReference>
<dbReference type="FunFam" id="2.10.60.10:FF:000024">
    <property type="entry name" value="Cytotoxin 1"/>
    <property type="match status" value="1"/>
</dbReference>
<dbReference type="Gene3D" id="2.10.60.10">
    <property type="entry name" value="CD59"/>
    <property type="match status" value="1"/>
</dbReference>
<dbReference type="InterPro" id="IPR003571">
    <property type="entry name" value="Snake_3FTx"/>
</dbReference>
<dbReference type="InterPro" id="IPR045860">
    <property type="entry name" value="Snake_toxin-like_sf"/>
</dbReference>
<dbReference type="InterPro" id="IPR018354">
    <property type="entry name" value="Snake_toxin_con_site"/>
</dbReference>
<dbReference type="InterPro" id="IPR054131">
    <property type="entry name" value="Toxin_cobra-type"/>
</dbReference>
<dbReference type="Pfam" id="PF21947">
    <property type="entry name" value="Toxin_cobra-type"/>
    <property type="match status" value="1"/>
</dbReference>
<dbReference type="SUPFAM" id="SSF57302">
    <property type="entry name" value="Snake toxin-like"/>
    <property type="match status" value="1"/>
</dbReference>
<dbReference type="PROSITE" id="PS00272">
    <property type="entry name" value="SNAKE_TOXIN"/>
    <property type="match status" value="1"/>
</dbReference>
<comment type="function">
    <text evidence="3">Binds to muscle nicotinic acetylcholine receptor (nAChR) and inhibit acetylcholine from binding to the receptor, thereby impairing neuromuscular transmission.</text>
</comment>
<comment type="subcellular location">
    <subcellularLocation>
        <location evidence="1">Secreted</location>
    </subcellularLocation>
</comment>
<comment type="tissue specificity">
    <text evidence="4">Expressed by the venom gland.</text>
</comment>
<comment type="similarity">
    <text evidence="4">Belongs to the three-finger toxin family. Short-chain subfamily. Type I alpha-neurotoxin sub-subfamily.</text>
</comment>
<feature type="signal peptide" evidence="1">
    <location>
        <begin position="1"/>
        <end position="21"/>
    </location>
</feature>
<feature type="chain" id="PRO_0000035457" description="Alpha-neurotoxin NTX-1">
    <location>
        <begin position="22"/>
        <end position="83"/>
    </location>
</feature>
<feature type="disulfide bond" evidence="2">
    <location>
        <begin position="24"/>
        <end position="45"/>
    </location>
</feature>
<feature type="disulfide bond" evidence="2">
    <location>
        <begin position="38"/>
        <end position="62"/>
    </location>
</feature>
<feature type="disulfide bond" evidence="2">
    <location>
        <begin position="64"/>
        <end position="75"/>
    </location>
</feature>
<feature type="disulfide bond" evidence="2">
    <location>
        <begin position="76"/>
        <end position="81"/>
    </location>
</feature>
<feature type="sequence conflict" description="In Ref. 2; AAA66025." evidence="4" ref="2">
    <original>N</original>
    <variation>D</variation>
    <location>
        <position position="26"/>
    </location>
</feature>
<proteinExistence type="inferred from homology"/>